<protein>
    <recommendedName>
        <fullName evidence="1">3-hydroxyacyl-[acyl-carrier-protein] dehydratase FabZ</fullName>
        <ecNumber evidence="1">4.2.1.59</ecNumber>
    </recommendedName>
    <alternativeName>
        <fullName evidence="1">(3R)-hydroxymyristoyl-[acyl-carrier-protein] dehydratase</fullName>
        <shortName evidence="1">(3R)-hydroxymyristoyl-ACP dehydrase</shortName>
    </alternativeName>
    <alternativeName>
        <fullName evidence="1">Beta-hydroxyacyl-ACP dehydratase</fullName>
    </alternativeName>
</protein>
<dbReference type="EC" id="4.2.1.59" evidence="1"/>
<dbReference type="EMBL" id="CP000671">
    <property type="protein sequence ID" value="ABQ98693.1"/>
    <property type="molecule type" value="Genomic_DNA"/>
</dbReference>
<dbReference type="SMR" id="A5UD42"/>
<dbReference type="KEGG" id="hip:CGSHiEE_06770"/>
<dbReference type="HOGENOM" id="CLU_078912_1_0_6"/>
<dbReference type="GO" id="GO:0005737">
    <property type="term" value="C:cytoplasm"/>
    <property type="evidence" value="ECO:0007669"/>
    <property type="project" value="UniProtKB-SubCell"/>
</dbReference>
<dbReference type="GO" id="GO:0016020">
    <property type="term" value="C:membrane"/>
    <property type="evidence" value="ECO:0007669"/>
    <property type="project" value="GOC"/>
</dbReference>
<dbReference type="GO" id="GO:0019171">
    <property type="term" value="F:(3R)-hydroxyacyl-[acyl-carrier-protein] dehydratase activity"/>
    <property type="evidence" value="ECO:0007669"/>
    <property type="project" value="UniProtKB-EC"/>
</dbReference>
<dbReference type="GO" id="GO:0006633">
    <property type="term" value="P:fatty acid biosynthetic process"/>
    <property type="evidence" value="ECO:0007669"/>
    <property type="project" value="UniProtKB-UniRule"/>
</dbReference>
<dbReference type="GO" id="GO:0009245">
    <property type="term" value="P:lipid A biosynthetic process"/>
    <property type="evidence" value="ECO:0007669"/>
    <property type="project" value="UniProtKB-UniRule"/>
</dbReference>
<dbReference type="CDD" id="cd01288">
    <property type="entry name" value="FabZ"/>
    <property type="match status" value="1"/>
</dbReference>
<dbReference type="FunFam" id="3.10.129.10:FF:000001">
    <property type="entry name" value="3-hydroxyacyl-[acyl-carrier-protein] dehydratase FabZ"/>
    <property type="match status" value="1"/>
</dbReference>
<dbReference type="Gene3D" id="3.10.129.10">
    <property type="entry name" value="Hotdog Thioesterase"/>
    <property type="match status" value="1"/>
</dbReference>
<dbReference type="HAMAP" id="MF_00406">
    <property type="entry name" value="FabZ"/>
    <property type="match status" value="1"/>
</dbReference>
<dbReference type="InterPro" id="IPR013114">
    <property type="entry name" value="FabA_FabZ"/>
</dbReference>
<dbReference type="InterPro" id="IPR010084">
    <property type="entry name" value="FabZ"/>
</dbReference>
<dbReference type="InterPro" id="IPR029069">
    <property type="entry name" value="HotDog_dom_sf"/>
</dbReference>
<dbReference type="NCBIfam" id="TIGR01750">
    <property type="entry name" value="fabZ"/>
    <property type="match status" value="1"/>
</dbReference>
<dbReference type="NCBIfam" id="NF000582">
    <property type="entry name" value="PRK00006.1"/>
    <property type="match status" value="1"/>
</dbReference>
<dbReference type="PANTHER" id="PTHR30272">
    <property type="entry name" value="3-HYDROXYACYL-[ACYL-CARRIER-PROTEIN] DEHYDRATASE"/>
    <property type="match status" value="1"/>
</dbReference>
<dbReference type="PANTHER" id="PTHR30272:SF1">
    <property type="entry name" value="3-HYDROXYACYL-[ACYL-CARRIER-PROTEIN] DEHYDRATASE"/>
    <property type="match status" value="1"/>
</dbReference>
<dbReference type="Pfam" id="PF07977">
    <property type="entry name" value="FabA"/>
    <property type="match status" value="1"/>
</dbReference>
<dbReference type="SUPFAM" id="SSF54637">
    <property type="entry name" value="Thioesterase/thiol ester dehydrase-isomerase"/>
    <property type="match status" value="1"/>
</dbReference>
<keyword id="KW-0963">Cytoplasm</keyword>
<keyword id="KW-0441">Lipid A biosynthesis</keyword>
<keyword id="KW-0444">Lipid biosynthesis</keyword>
<keyword id="KW-0443">Lipid metabolism</keyword>
<keyword id="KW-0456">Lyase</keyword>
<accession>A5UD42</accession>
<gene>
    <name evidence="1" type="primary">fabZ</name>
    <name type="ordered locus">CGSHiEE_06770</name>
</gene>
<comment type="function">
    <text evidence="1">Involved in unsaturated fatty acids biosynthesis. Catalyzes the dehydration of short chain beta-hydroxyacyl-ACPs and long chain saturated and unsaturated beta-hydroxyacyl-ACPs.</text>
</comment>
<comment type="catalytic activity">
    <reaction evidence="1">
        <text>a (3R)-hydroxyacyl-[ACP] = a (2E)-enoyl-[ACP] + H2O</text>
        <dbReference type="Rhea" id="RHEA:13097"/>
        <dbReference type="Rhea" id="RHEA-COMP:9925"/>
        <dbReference type="Rhea" id="RHEA-COMP:9945"/>
        <dbReference type="ChEBI" id="CHEBI:15377"/>
        <dbReference type="ChEBI" id="CHEBI:78784"/>
        <dbReference type="ChEBI" id="CHEBI:78827"/>
        <dbReference type="EC" id="4.2.1.59"/>
    </reaction>
</comment>
<comment type="subcellular location">
    <subcellularLocation>
        <location evidence="1">Cytoplasm</location>
    </subcellularLocation>
</comment>
<comment type="similarity">
    <text evidence="1">Belongs to the thioester dehydratase family. FabZ subfamily.</text>
</comment>
<sequence>MSEQQPRVIESKEIMTLLPHRYPFLLVDRVLDFKEGEWLKAIKNISVNEPCFTGHFPGEPILPGVLILEALAQAMGILAFKTLELKGGELFYFAGIDEARFKRPVLPGDQMELNVQVIKERRGITAFTGVATVNGEIACEAKLMCARR</sequence>
<reference key="1">
    <citation type="journal article" date="2007" name="Genome Biol.">
        <title>Characterization and modeling of the Haemophilus influenzae core and supragenomes based on the complete genomic sequences of Rd and 12 clinical nontypeable strains.</title>
        <authorList>
            <person name="Hogg J.S."/>
            <person name="Hu F.Z."/>
            <person name="Janto B."/>
            <person name="Boissy R."/>
            <person name="Hayes J."/>
            <person name="Keefe R."/>
            <person name="Post J.C."/>
            <person name="Ehrlich G.D."/>
        </authorList>
    </citation>
    <scope>NUCLEOTIDE SEQUENCE [LARGE SCALE GENOMIC DNA]</scope>
    <source>
        <strain>PittEE</strain>
    </source>
</reference>
<feature type="chain" id="PRO_1000049846" description="3-hydroxyacyl-[acyl-carrier-protein] dehydratase FabZ">
    <location>
        <begin position="1"/>
        <end position="148"/>
    </location>
</feature>
<feature type="active site" evidence="1">
    <location>
        <position position="55"/>
    </location>
</feature>
<organism>
    <name type="scientific">Haemophilus influenzae (strain PittEE)</name>
    <dbReference type="NCBI Taxonomy" id="374930"/>
    <lineage>
        <taxon>Bacteria</taxon>
        <taxon>Pseudomonadati</taxon>
        <taxon>Pseudomonadota</taxon>
        <taxon>Gammaproteobacteria</taxon>
        <taxon>Pasteurellales</taxon>
        <taxon>Pasteurellaceae</taxon>
        <taxon>Haemophilus</taxon>
    </lineage>
</organism>
<proteinExistence type="inferred from homology"/>
<name>FABZ_HAEIE</name>
<evidence type="ECO:0000255" key="1">
    <source>
        <dbReference type="HAMAP-Rule" id="MF_00406"/>
    </source>
</evidence>